<protein>
    <recommendedName>
        <fullName>Probable M18 family aminopeptidase 1</fullName>
        <ecNumber>3.4.11.-</ecNumber>
    </recommendedName>
</protein>
<keyword id="KW-0002">3D-structure</keyword>
<keyword id="KW-0031">Aminopeptidase</keyword>
<keyword id="KW-0378">Hydrolase</keyword>
<keyword id="KW-0479">Metal-binding</keyword>
<keyword id="KW-0482">Metalloprotease</keyword>
<keyword id="KW-0645">Protease</keyword>
<keyword id="KW-1185">Reference proteome</keyword>
<keyword id="KW-0862">Zinc</keyword>
<comment type="cofactor">
    <cofactor evidence="1">
        <name>Zn(2+)</name>
        <dbReference type="ChEBI" id="CHEBI:29105"/>
    </cofactor>
</comment>
<comment type="similarity">
    <text evidence="3">Belongs to the peptidase M18 family.</text>
</comment>
<comment type="sequence caution" evidence="3">
    <conflict type="erroneous initiation">
        <sequence resource="EMBL-CDS" id="AAD35452"/>
    </conflict>
</comment>
<proteinExistence type="evidence at protein level"/>
<accession>Q9WYJ9</accession>
<dbReference type="EC" id="3.4.11.-"/>
<dbReference type="EMBL" id="AE000512">
    <property type="protein sequence ID" value="AAD35452.1"/>
    <property type="status" value="ALT_INIT"/>
    <property type="molecule type" value="Genomic_DNA"/>
</dbReference>
<dbReference type="PIR" id="E72387">
    <property type="entry name" value="E72387"/>
</dbReference>
<dbReference type="RefSeq" id="NP_228176.1">
    <property type="nucleotide sequence ID" value="NC_000853.1"/>
</dbReference>
<dbReference type="RefSeq" id="WP_004083171.1">
    <property type="nucleotide sequence ID" value="NZ_CP011107.1"/>
</dbReference>
<dbReference type="PDB" id="2GLF">
    <property type="method" value="X-ray"/>
    <property type="resolution" value="2.80 A"/>
    <property type="chains" value="A/B/C/D=2-451"/>
</dbReference>
<dbReference type="PDBsum" id="2GLF"/>
<dbReference type="SMR" id="Q9WYJ9"/>
<dbReference type="STRING" id="243274.TM_0365"/>
<dbReference type="MEROPS" id="M18.004"/>
<dbReference type="PaxDb" id="243274-THEMA_02890"/>
<dbReference type="EnsemblBacteria" id="AAD35452">
    <property type="protein sequence ID" value="AAD35452"/>
    <property type="gene ID" value="TM_0365"/>
</dbReference>
<dbReference type="KEGG" id="tma:TM0365"/>
<dbReference type="KEGG" id="tmi:THEMA_02890"/>
<dbReference type="KEGG" id="tmm:Tmari_0363"/>
<dbReference type="KEGG" id="tmw:THMA_0373"/>
<dbReference type="PATRIC" id="fig|243274.5.peg.370"/>
<dbReference type="eggNOG" id="COG1362">
    <property type="taxonomic scope" value="Bacteria"/>
</dbReference>
<dbReference type="InParanoid" id="Q9WYJ9"/>
<dbReference type="OrthoDB" id="89722at2"/>
<dbReference type="EvolutionaryTrace" id="Q9WYJ9"/>
<dbReference type="Proteomes" id="UP000008183">
    <property type="component" value="Chromosome"/>
</dbReference>
<dbReference type="GO" id="GO:0005737">
    <property type="term" value="C:cytoplasm"/>
    <property type="evidence" value="ECO:0007669"/>
    <property type="project" value="UniProtKB-ARBA"/>
</dbReference>
<dbReference type="GO" id="GO:0004177">
    <property type="term" value="F:aminopeptidase activity"/>
    <property type="evidence" value="ECO:0007669"/>
    <property type="project" value="UniProtKB-UniRule"/>
</dbReference>
<dbReference type="GO" id="GO:0008237">
    <property type="term" value="F:metallopeptidase activity"/>
    <property type="evidence" value="ECO:0007669"/>
    <property type="project" value="UniProtKB-UniRule"/>
</dbReference>
<dbReference type="GO" id="GO:0008270">
    <property type="term" value="F:zinc ion binding"/>
    <property type="evidence" value="ECO:0007669"/>
    <property type="project" value="UniProtKB-UniRule"/>
</dbReference>
<dbReference type="GO" id="GO:0006508">
    <property type="term" value="P:proteolysis"/>
    <property type="evidence" value="ECO:0007669"/>
    <property type="project" value="UniProtKB-UniRule"/>
</dbReference>
<dbReference type="CDD" id="cd05659">
    <property type="entry name" value="M18_API"/>
    <property type="match status" value="1"/>
</dbReference>
<dbReference type="FunFam" id="2.30.250.10:FF:000006">
    <property type="entry name" value="Probable M18 family aminopeptidase 1"/>
    <property type="match status" value="1"/>
</dbReference>
<dbReference type="Gene3D" id="2.30.250.10">
    <property type="entry name" value="Aminopeptidase i, Domain 2"/>
    <property type="match status" value="1"/>
</dbReference>
<dbReference type="Gene3D" id="3.40.630.10">
    <property type="entry name" value="Zn peptidases"/>
    <property type="match status" value="1"/>
</dbReference>
<dbReference type="HAMAP" id="MF_00466">
    <property type="entry name" value="Aminopeptidase_M18_1"/>
    <property type="match status" value="1"/>
</dbReference>
<dbReference type="InterPro" id="IPR022983">
    <property type="entry name" value="M18_aminopeptidase_1"/>
</dbReference>
<dbReference type="InterPro" id="IPR001948">
    <property type="entry name" value="Peptidase_M18"/>
</dbReference>
<dbReference type="InterPro" id="IPR023358">
    <property type="entry name" value="Peptidase_M18_dom2"/>
</dbReference>
<dbReference type="NCBIfam" id="NF002600">
    <property type="entry name" value="PRK02256.1"/>
    <property type="match status" value="1"/>
</dbReference>
<dbReference type="PANTHER" id="PTHR28570">
    <property type="entry name" value="ASPARTYL AMINOPEPTIDASE"/>
    <property type="match status" value="1"/>
</dbReference>
<dbReference type="PANTHER" id="PTHR28570:SF2">
    <property type="entry name" value="M18 FAMILY AMINOPEPTIDASE 1-RELATED"/>
    <property type="match status" value="1"/>
</dbReference>
<dbReference type="Pfam" id="PF02127">
    <property type="entry name" value="Peptidase_M18"/>
    <property type="match status" value="1"/>
</dbReference>
<dbReference type="PRINTS" id="PR00932">
    <property type="entry name" value="AMINO1PTASE"/>
</dbReference>
<dbReference type="SUPFAM" id="SSF101821">
    <property type="entry name" value="Aminopeptidase/glucanase lid domain"/>
    <property type="match status" value="1"/>
</dbReference>
<dbReference type="SUPFAM" id="SSF53187">
    <property type="entry name" value="Zn-dependent exopeptidases"/>
    <property type="match status" value="1"/>
</dbReference>
<gene>
    <name type="primary">apeA</name>
    <name type="ordered locus">TM_0365</name>
</gene>
<reference key="1">
    <citation type="journal article" date="1999" name="Nature">
        <title>Evidence for lateral gene transfer between Archaea and Bacteria from genome sequence of Thermotoga maritima.</title>
        <authorList>
            <person name="Nelson K.E."/>
            <person name="Clayton R.A."/>
            <person name="Gill S.R."/>
            <person name="Gwinn M.L."/>
            <person name="Dodson R.J."/>
            <person name="Haft D.H."/>
            <person name="Hickey E.K."/>
            <person name="Peterson J.D."/>
            <person name="Nelson W.C."/>
            <person name="Ketchum K.A."/>
            <person name="McDonald L.A."/>
            <person name="Utterback T.R."/>
            <person name="Malek J.A."/>
            <person name="Linher K.D."/>
            <person name="Garrett M.M."/>
            <person name="Stewart A.M."/>
            <person name="Cotton M.D."/>
            <person name="Pratt M.S."/>
            <person name="Phillips C.A."/>
            <person name="Richardson D.L."/>
            <person name="Heidelberg J.F."/>
            <person name="Sutton G.G."/>
            <person name="Fleischmann R.D."/>
            <person name="Eisen J.A."/>
            <person name="White O."/>
            <person name="Salzberg S.L."/>
            <person name="Smith H.O."/>
            <person name="Venter J.C."/>
            <person name="Fraser C.M."/>
        </authorList>
    </citation>
    <scope>NUCLEOTIDE SEQUENCE [LARGE SCALE GENOMIC DNA]</scope>
    <source>
        <strain>ATCC 43589 / DSM 3109 / JCM 10099 / NBRC 100826 / MSB8</strain>
    </source>
</reference>
<feature type="chain" id="PRO_0000173458" description="Probable M18 family aminopeptidase 1">
    <location>
        <begin position="1"/>
        <end position="451"/>
    </location>
</feature>
<feature type="binding site" evidence="2">
    <location>
        <position position="93"/>
    </location>
    <ligand>
        <name>Zn(2+)</name>
        <dbReference type="ChEBI" id="CHEBI:29105"/>
    </ligand>
</feature>
<feature type="binding site" evidence="2">
    <location>
        <position position="168"/>
    </location>
    <ligand>
        <name>Zn(2+)</name>
        <dbReference type="ChEBI" id="CHEBI:29105"/>
    </ligand>
</feature>
<feature type="binding site" evidence="2">
    <location>
        <position position="426"/>
    </location>
    <ligand>
        <name>Zn(2+)</name>
        <dbReference type="ChEBI" id="CHEBI:29105"/>
    </ligand>
</feature>
<feature type="helix" evidence="4">
    <location>
        <begin position="8"/>
        <end position="10"/>
    </location>
</feature>
<feature type="helix" evidence="4">
    <location>
        <begin position="14"/>
        <end position="30"/>
    </location>
</feature>
<feature type="helix" evidence="4">
    <location>
        <begin position="34"/>
        <end position="46"/>
    </location>
</feature>
<feature type="turn" evidence="4">
    <location>
        <begin position="47"/>
        <end position="49"/>
    </location>
</feature>
<feature type="strand" evidence="4">
    <location>
        <begin position="65"/>
        <end position="72"/>
    </location>
</feature>
<feature type="strand" evidence="4">
    <location>
        <begin position="74"/>
        <end position="79"/>
    </location>
</feature>
<feature type="helix" evidence="4">
    <location>
        <begin position="83"/>
        <end position="85"/>
    </location>
</feature>
<feature type="strand" evidence="4">
    <location>
        <begin position="88"/>
        <end position="93"/>
    </location>
</feature>
<feature type="strand" evidence="4">
    <location>
        <begin position="98"/>
        <end position="109"/>
    </location>
</feature>
<feature type="strand" evidence="4">
    <location>
        <begin position="112"/>
        <end position="122"/>
    </location>
</feature>
<feature type="helix" evidence="4">
    <location>
        <begin position="126"/>
        <end position="128"/>
    </location>
</feature>
<feature type="strand" evidence="4">
    <location>
        <begin position="129"/>
        <end position="131"/>
    </location>
</feature>
<feature type="strand" evidence="4">
    <location>
        <begin position="133"/>
        <end position="140"/>
    </location>
</feature>
<feature type="strand" evidence="4">
    <location>
        <begin position="146"/>
        <end position="157"/>
    </location>
</feature>
<feature type="helix" evidence="4">
    <location>
        <begin position="167"/>
        <end position="169"/>
    </location>
</feature>
<feature type="turn" evidence="4">
    <location>
        <begin position="176"/>
        <end position="179"/>
    </location>
</feature>
<feature type="helix" evidence="4">
    <location>
        <begin position="182"/>
        <end position="184"/>
    </location>
</feature>
<feature type="strand" evidence="4">
    <location>
        <begin position="186"/>
        <end position="190"/>
    </location>
</feature>
<feature type="helix" evidence="4">
    <location>
        <begin position="201"/>
        <end position="214"/>
    </location>
</feature>
<feature type="helix" evidence="4">
    <location>
        <begin position="218"/>
        <end position="221"/>
    </location>
</feature>
<feature type="strand" evidence="4">
    <location>
        <begin position="224"/>
        <end position="230"/>
    </location>
</feature>
<feature type="strand" evidence="4">
    <location>
        <begin position="235"/>
        <end position="238"/>
    </location>
</feature>
<feature type="strand" evidence="4">
    <location>
        <begin position="243"/>
        <end position="246"/>
    </location>
</feature>
<feature type="helix" evidence="4">
    <location>
        <begin position="249"/>
        <end position="264"/>
    </location>
</feature>
<feature type="strand" evidence="4">
    <location>
        <begin position="271"/>
        <end position="277"/>
    </location>
</feature>
<feature type="helix" evidence="4">
    <location>
        <begin position="279"/>
        <end position="281"/>
    </location>
</feature>
<feature type="strand" evidence="4">
    <location>
        <begin position="285"/>
        <end position="292"/>
    </location>
</feature>
<feature type="helix" evidence="4">
    <location>
        <begin position="293"/>
        <end position="304"/>
    </location>
</feature>
<feature type="strand" evidence="4">
    <location>
        <begin position="308"/>
        <end position="310"/>
    </location>
</feature>
<feature type="helix" evidence="4">
    <location>
        <begin position="311"/>
        <end position="319"/>
    </location>
</feature>
<feature type="strand" evidence="4">
    <location>
        <begin position="322"/>
        <end position="326"/>
    </location>
</feature>
<feature type="helix" evidence="4">
    <location>
        <begin position="334"/>
        <end position="339"/>
    </location>
</feature>
<feature type="helix" evidence="4">
    <location>
        <begin position="342"/>
        <end position="344"/>
    </location>
</feature>
<feature type="strand" evidence="4">
    <location>
        <begin position="352"/>
        <end position="357"/>
    </location>
</feature>
<feature type="helix" evidence="4">
    <location>
        <begin position="371"/>
        <end position="383"/>
    </location>
</feature>
<feature type="strand" evidence="4">
    <location>
        <begin position="388"/>
        <end position="390"/>
    </location>
</feature>
<feature type="strand" evidence="4">
    <location>
        <begin position="393"/>
        <end position="395"/>
    </location>
</feature>
<feature type="helix" evidence="4">
    <location>
        <begin position="405"/>
        <end position="409"/>
    </location>
</feature>
<feature type="turn" evidence="4">
    <location>
        <begin position="410"/>
        <end position="412"/>
    </location>
</feature>
<feature type="strand" evidence="4">
    <location>
        <begin position="415"/>
        <end position="419"/>
    </location>
</feature>
<feature type="strand" evidence="4">
    <location>
        <begin position="421"/>
        <end position="424"/>
    </location>
</feature>
<feature type="strand" evidence="4">
    <location>
        <begin position="427"/>
        <end position="433"/>
    </location>
</feature>
<feature type="helix" evidence="4">
    <location>
        <begin position="434"/>
        <end position="450"/>
    </location>
</feature>
<organism>
    <name type="scientific">Thermotoga maritima (strain ATCC 43589 / DSM 3109 / JCM 10099 / NBRC 100826 / MSB8)</name>
    <dbReference type="NCBI Taxonomy" id="243274"/>
    <lineage>
        <taxon>Bacteria</taxon>
        <taxon>Thermotogati</taxon>
        <taxon>Thermotogota</taxon>
        <taxon>Thermotogae</taxon>
        <taxon>Thermotogales</taxon>
        <taxon>Thermotogaceae</taxon>
        <taxon>Thermotoga</taxon>
    </lineage>
</organism>
<sequence length="451" mass="50381">MKMERKNVWHHRKKEEIEAFSKEYMEFMSKAKTERMTVKEIKRILDESGFVPLEDFAGDPMNMTVYAVNRGKAIAAFRVVDDLKRGLNLVVAHIDSPRLDFKPNPLIEDEQIALFKTHYYGGIKKYHWLSIPLEIHGVLFKNDGTEIEIHIGDKPEDPVFTIPDLLPHLDKEDAKISEKFKGENLMLIAGTIPLSGEEKEAVKTNVLKILNEMYGITEEDFVSGEIEVVPAFSPREVGMDRSLIGAYGQDDRICAYTALRALLSANPEKSIGVIFFDKEEIGSDGNTGAKARFYLKALRQILKMQGAKDSEFVLDEVLENTSVISGDVCAAVNPPYKDVHDLHNAPKLGYGVALVKYTGARGKYSTNDAHAEFVARVRKVLNEQGVIWQVATLGKVDQGGGGTIAKFFAERGSDVIDMGPALLGMHSPFEISSKADLFETYVAYRSLMEKL</sequence>
<evidence type="ECO:0000250" key="1"/>
<evidence type="ECO:0000255" key="2"/>
<evidence type="ECO:0000305" key="3"/>
<evidence type="ECO:0007829" key="4">
    <source>
        <dbReference type="PDB" id="2GLF"/>
    </source>
</evidence>
<name>APEA_THEMA</name>